<organism>
    <name type="scientific">Pseudomonas aeruginosa (strain ATCC 15692 / DSM 22644 / CIP 104116 / JCM 14847 / LMG 12228 / 1C / PRS 101 / PAO1)</name>
    <dbReference type="NCBI Taxonomy" id="208964"/>
    <lineage>
        <taxon>Bacteria</taxon>
        <taxon>Pseudomonadati</taxon>
        <taxon>Pseudomonadota</taxon>
        <taxon>Gammaproteobacteria</taxon>
        <taxon>Pseudomonadales</taxon>
        <taxon>Pseudomonadaceae</taxon>
        <taxon>Pseudomonas</taxon>
    </lineage>
</organism>
<protein>
    <recommendedName>
        <fullName evidence="4">2-heptyl-4(1H)-quinolone synthase subunit PqsB</fullName>
    </recommendedName>
</protein>
<sequence length="283" mass="30501">MLIQAVGVNLPPSYVCLEGPLGGERPRAQGDEMLMQRLLPAVREALDEAAVKPEEIDLIVGLALSPDHLIENRDIMAPKIGHPLQKVLGANRAHVFDLTDSSLARALYVVDTLASDQGYRNVLVVRGESSQGLEVDSESGFALADGALALLCRPTGKAAFRRGALGGDPAQEWLPLSIPLNTDIRQVGDVKGHLNLPAQPGLPEAVRAGFTRLAGDFPQLNWVREEWFGQGRPDGRCLGPFELASQLRAAQRDRLDELLLISFDPFGMVVEGVTLELAGEAHA</sequence>
<comment type="function">
    <text evidence="1 2">Required for the biosynthesis of the quorum-sensing signaling molecules 2-heptyl-4(1H)-quinolone (HHQ) and 2-heptyl-3-hydroxy-4(1H)-quinolone (Pseudomonas quinolone signal or PQS), which are important for biofilm formation and virulence. The PqsC/PqsB complex catalyzes the condensation of 2-aminobenzoylacetate (2-ABA) and octanoyl-CoA to form HHQ. PqsB, together with PqsC, catalyzes the coupling of 2-ABA with the octanoate group, leading to decarboxylation and dehydration, and resulting in closure of the quinoline ring. PqsB is probably required for the proper folding of PqsC rather than for a direct enzymatic role in the process.</text>
</comment>
<comment type="activity regulation">
    <text evidence="2">Activity of the complex is inhibited by 2-aminoacetophenone (2-AA).</text>
</comment>
<comment type="subunit">
    <text evidence="1 2">Forms a tight complex with PqsC.</text>
</comment>
<comment type="subcellular location">
    <subcellularLocation>
        <location evidence="1">Cytoplasm</location>
    </subcellularLocation>
</comment>
<comment type="similarity">
    <text evidence="4">Belongs to the thiolase-like superfamily. FabH family.</text>
</comment>
<gene>
    <name evidence="3" type="primary">pqsB</name>
    <name evidence="5" type="ordered locus">PA0997</name>
</gene>
<dbReference type="EMBL" id="AE004091">
    <property type="protein sequence ID" value="AAG04386.1"/>
    <property type="molecule type" value="Genomic_DNA"/>
</dbReference>
<dbReference type="PIR" id="H83521">
    <property type="entry name" value="H83521"/>
</dbReference>
<dbReference type="RefSeq" id="NP_249688.1">
    <property type="nucleotide sequence ID" value="NC_002516.2"/>
</dbReference>
<dbReference type="RefSeq" id="WP_003108611.1">
    <property type="nucleotide sequence ID" value="NZ_QZGE01000006.1"/>
</dbReference>
<dbReference type="PDB" id="5DWZ">
    <property type="method" value="X-ray"/>
    <property type="resolution" value="2.04 A"/>
    <property type="chains" value="A/B/E/G=1-283"/>
</dbReference>
<dbReference type="PDB" id="6ESZ">
    <property type="method" value="X-ray"/>
    <property type="resolution" value="1.84 A"/>
    <property type="chains" value="B/D=1-283"/>
</dbReference>
<dbReference type="PDB" id="6ET0">
    <property type="method" value="X-ray"/>
    <property type="resolution" value="1.53 A"/>
    <property type="chains" value="B/D=1-283"/>
</dbReference>
<dbReference type="PDB" id="6ET1">
    <property type="method" value="X-ray"/>
    <property type="resolution" value="2.65 A"/>
    <property type="chains" value="B/D/F/H=1-283"/>
</dbReference>
<dbReference type="PDB" id="6ET2">
    <property type="method" value="X-ray"/>
    <property type="resolution" value="2.60 A"/>
    <property type="chains" value="B/D/F/H/J/L/N/P=1-283"/>
</dbReference>
<dbReference type="PDB" id="6ET3">
    <property type="method" value="X-ray"/>
    <property type="resolution" value="2.25 A"/>
    <property type="chains" value="B/D=1-283"/>
</dbReference>
<dbReference type="PDBsum" id="5DWZ"/>
<dbReference type="PDBsum" id="6ESZ"/>
<dbReference type="PDBsum" id="6ET0"/>
<dbReference type="PDBsum" id="6ET1"/>
<dbReference type="PDBsum" id="6ET2"/>
<dbReference type="PDBsum" id="6ET3"/>
<dbReference type="SMR" id="Q9I4X2"/>
<dbReference type="STRING" id="208964.PA0997"/>
<dbReference type="PaxDb" id="208964-PA0997"/>
<dbReference type="DNASU" id="883098"/>
<dbReference type="GeneID" id="883098"/>
<dbReference type="KEGG" id="pae:PA0997"/>
<dbReference type="PATRIC" id="fig|208964.12.peg.1029"/>
<dbReference type="PseudoCAP" id="PA0997"/>
<dbReference type="HOGENOM" id="CLU_983039_0_0_6"/>
<dbReference type="InParanoid" id="Q9I4X2"/>
<dbReference type="OrthoDB" id="9031951at2"/>
<dbReference type="BioCyc" id="MetaCyc:MONOMER-19872"/>
<dbReference type="BioCyc" id="PAER208964:G1FZ6-1016-MONOMER"/>
<dbReference type="BRENDA" id="2.3.1.230">
    <property type="organism ID" value="5087"/>
</dbReference>
<dbReference type="BRENDA" id="2.3.1.B38">
    <property type="organism ID" value="5087"/>
</dbReference>
<dbReference type="EvolutionaryTrace" id="Q9I4X2"/>
<dbReference type="PHI-base" id="PHI:5586"/>
<dbReference type="Proteomes" id="UP000002438">
    <property type="component" value="Chromosome"/>
</dbReference>
<dbReference type="GO" id="GO:0005737">
    <property type="term" value="C:cytoplasm"/>
    <property type="evidence" value="ECO:0007669"/>
    <property type="project" value="UniProtKB-SubCell"/>
</dbReference>
<dbReference type="GO" id="GO:0016746">
    <property type="term" value="F:acyltransferase activity"/>
    <property type="evidence" value="ECO:0007669"/>
    <property type="project" value="InterPro"/>
</dbReference>
<dbReference type="GO" id="GO:0044550">
    <property type="term" value="P:secondary metabolite biosynthetic process"/>
    <property type="evidence" value="ECO:0000315"/>
    <property type="project" value="PseudoCAP"/>
</dbReference>
<dbReference type="Gene3D" id="3.40.47.10">
    <property type="match status" value="1"/>
</dbReference>
<dbReference type="InterPro" id="IPR016039">
    <property type="entry name" value="Thiolase-like"/>
</dbReference>
<dbReference type="SUPFAM" id="SSF53901">
    <property type="entry name" value="Thiolase-like"/>
    <property type="match status" value="1"/>
</dbReference>
<evidence type="ECO:0000269" key="1">
    <source>
    </source>
</evidence>
<evidence type="ECO:0000269" key="2">
    <source>
    </source>
</evidence>
<evidence type="ECO:0000303" key="3">
    <source>
    </source>
</evidence>
<evidence type="ECO:0000305" key="4"/>
<evidence type="ECO:0000312" key="5">
    <source>
        <dbReference type="EMBL" id="AAG04386.1"/>
    </source>
</evidence>
<evidence type="ECO:0007744" key="6">
    <source>
        <dbReference type="PDB" id="5DWZ"/>
    </source>
</evidence>
<evidence type="ECO:0007829" key="7">
    <source>
        <dbReference type="PDB" id="6ET0"/>
    </source>
</evidence>
<name>PQSB_PSEAE</name>
<feature type="chain" id="PRO_0000441874" description="2-heptyl-4(1H)-quinolone synthase subunit PqsB">
    <location>
        <begin position="1"/>
        <end position="283"/>
    </location>
</feature>
<feature type="strand" evidence="7">
    <location>
        <begin position="2"/>
        <end position="9"/>
    </location>
</feature>
<feature type="strand" evidence="7">
    <location>
        <begin position="14"/>
        <end position="17"/>
    </location>
</feature>
<feature type="strand" evidence="7">
    <location>
        <begin position="23"/>
        <end position="26"/>
    </location>
</feature>
<feature type="helix" evidence="7">
    <location>
        <begin position="35"/>
        <end position="49"/>
    </location>
</feature>
<feature type="helix" evidence="7">
    <location>
        <begin position="53"/>
        <end position="55"/>
    </location>
</feature>
<feature type="strand" evidence="7">
    <location>
        <begin position="58"/>
        <end position="62"/>
    </location>
</feature>
<feature type="strand" evidence="7">
    <location>
        <begin position="69"/>
        <end position="72"/>
    </location>
</feature>
<feature type="strand" evidence="7">
    <location>
        <begin position="75"/>
        <end position="78"/>
    </location>
</feature>
<feature type="helix" evidence="7">
    <location>
        <begin position="81"/>
        <end position="88"/>
    </location>
</feature>
<feature type="strand" evidence="7">
    <location>
        <begin position="94"/>
        <end position="97"/>
    </location>
</feature>
<feature type="helix" evidence="7">
    <location>
        <begin position="103"/>
        <end position="117"/>
    </location>
</feature>
<feature type="strand" evidence="7">
    <location>
        <begin position="122"/>
        <end position="128"/>
    </location>
</feature>
<feature type="helix" evidence="7">
    <location>
        <begin position="130"/>
        <end position="132"/>
    </location>
</feature>
<feature type="turn" evidence="7">
    <location>
        <begin position="137"/>
        <end position="139"/>
    </location>
</feature>
<feature type="strand" evidence="7">
    <location>
        <begin position="146"/>
        <end position="153"/>
    </location>
</feature>
<feature type="strand" evidence="7">
    <location>
        <begin position="160"/>
        <end position="164"/>
    </location>
</feature>
<feature type="strand" evidence="7">
    <location>
        <begin position="177"/>
        <end position="180"/>
    </location>
</feature>
<feature type="strand" evidence="7">
    <location>
        <begin position="191"/>
        <end position="193"/>
    </location>
</feature>
<feature type="helix" evidence="7">
    <location>
        <begin position="202"/>
        <end position="214"/>
    </location>
</feature>
<feature type="strand" evidence="7">
    <location>
        <begin position="222"/>
        <end position="224"/>
    </location>
</feature>
<feature type="helix" evidence="7">
    <location>
        <begin position="233"/>
        <end position="235"/>
    </location>
</feature>
<feature type="helix" evidence="7">
    <location>
        <begin position="240"/>
        <end position="242"/>
    </location>
</feature>
<feature type="helix" evidence="7">
    <location>
        <begin position="243"/>
        <end position="252"/>
    </location>
</feature>
<feature type="strand" evidence="7">
    <location>
        <begin position="256"/>
        <end position="264"/>
    </location>
</feature>
<feature type="turn" evidence="7">
    <location>
        <begin position="265"/>
        <end position="268"/>
    </location>
</feature>
<feature type="strand" evidence="7">
    <location>
        <begin position="269"/>
        <end position="277"/>
    </location>
</feature>
<feature type="helix" evidence="7">
    <location>
        <begin position="279"/>
        <end position="281"/>
    </location>
</feature>
<accession>Q9I4X2</accession>
<reference key="1">
    <citation type="journal article" date="2000" name="Nature">
        <title>Complete genome sequence of Pseudomonas aeruginosa PAO1, an opportunistic pathogen.</title>
        <authorList>
            <person name="Stover C.K."/>
            <person name="Pham X.-Q.T."/>
            <person name="Erwin A.L."/>
            <person name="Mizoguchi S.D."/>
            <person name="Warrener P."/>
            <person name="Hickey M.J."/>
            <person name="Brinkman F.S.L."/>
            <person name="Hufnagle W.O."/>
            <person name="Kowalik D.J."/>
            <person name="Lagrou M."/>
            <person name="Garber R.L."/>
            <person name="Goltry L."/>
            <person name="Tolentino E."/>
            <person name="Westbrock-Wadman S."/>
            <person name="Yuan Y."/>
            <person name="Brody L.L."/>
            <person name="Coulter S.N."/>
            <person name="Folger K.R."/>
            <person name="Kas A."/>
            <person name="Larbig K."/>
            <person name="Lim R.M."/>
            <person name="Smith K.A."/>
            <person name="Spencer D.H."/>
            <person name="Wong G.K.-S."/>
            <person name="Wu Z."/>
            <person name="Paulsen I.T."/>
            <person name="Reizer J."/>
            <person name="Saier M.H. Jr."/>
            <person name="Hancock R.E.W."/>
            <person name="Lory S."/>
            <person name="Olson M.V."/>
        </authorList>
    </citation>
    <scope>NUCLEOTIDE SEQUENCE [LARGE SCALE GENOMIC DNA]</scope>
    <source>
        <strain>ATCC 15692 / DSM 22644 / CIP 104116 / JCM 14847 / LMG 12228 / 1C / PRS 101 / PAO1</strain>
    </source>
</reference>
<reference key="2">
    <citation type="journal article" date="2013" name="Chem. Biol.">
        <title>The end of an old hypothesis: the Pseudomonas signaling molecules 4-hydroxy-2-alkylquinolines derive from fatty acids, not 3-ketofatty acids.</title>
        <authorList>
            <person name="Dulcey C.E."/>
            <person name="Dekimpe V."/>
            <person name="Fauvelle D.A."/>
            <person name="Milot S."/>
            <person name="Groleau M.C."/>
            <person name="Doucet N."/>
            <person name="Rahme L.G."/>
            <person name="Lepine F."/>
            <person name="Deziel E."/>
        </authorList>
    </citation>
    <scope>FUNCTION</scope>
    <scope>SUBUNIT</scope>
    <scope>SUBCELLULAR LOCATION</scope>
    <source>
        <strain>PA14</strain>
    </source>
</reference>
<reference evidence="6" key="3">
    <citation type="journal article" date="2016" name="J. Biol. Chem.">
        <title>PqsBC, a condensing enzyme in the biosynthesis of the Pseudomonas aeruginosa quinolone signal: crystal structure, inhibition, and reaction mechanism.</title>
        <authorList>
            <person name="Drees S.L."/>
            <person name="Li C."/>
            <person name="Prasetya F."/>
            <person name="Saleem M."/>
            <person name="Dreveny I."/>
            <person name="Williams P."/>
            <person name="Hennecke U."/>
            <person name="Emsley J."/>
            <person name="Fetzner S."/>
        </authorList>
    </citation>
    <scope>X-RAY CRYSTALLOGRAPHY (2.04 ANGSTROMS) IN COMPLEX WITH PQSC</scope>
    <scope>FUNCTION</scope>
    <scope>ACTIVITY REGULATION</scope>
    <scope>SUBUNIT</scope>
    <source>
        <strain>ATCC 15692 / DSM 22644 / CIP 104116 / JCM 14847 / LMG 12228 / 1C / PRS 101 / PAO1</strain>
    </source>
</reference>
<proteinExistence type="evidence at protein level"/>
<keyword id="KW-0002">3D-structure</keyword>
<keyword id="KW-0963">Cytoplasm</keyword>
<keyword id="KW-1185">Reference proteome</keyword>